<organism>
    <name type="scientific">Methylococcus capsulatus (strain ATCC 33009 / NCIMB 11132 / Bath)</name>
    <dbReference type="NCBI Taxonomy" id="243233"/>
    <lineage>
        <taxon>Bacteria</taxon>
        <taxon>Pseudomonadati</taxon>
        <taxon>Pseudomonadota</taxon>
        <taxon>Gammaproteobacteria</taxon>
        <taxon>Methylococcales</taxon>
        <taxon>Methylococcaceae</taxon>
        <taxon>Methylococcus</taxon>
    </lineage>
</organism>
<accession>Q60BU2</accession>
<dbReference type="EC" id="6.3.3.1" evidence="1"/>
<dbReference type="EMBL" id="AE017282">
    <property type="protein sequence ID" value="AAU90507.1"/>
    <property type="molecule type" value="Genomic_DNA"/>
</dbReference>
<dbReference type="RefSeq" id="WP_010959733.1">
    <property type="nucleotide sequence ID" value="NC_002977.6"/>
</dbReference>
<dbReference type="SMR" id="Q60BU2"/>
<dbReference type="STRING" id="243233.MCA0373"/>
<dbReference type="GeneID" id="88222715"/>
<dbReference type="KEGG" id="mca:MCA0373"/>
<dbReference type="eggNOG" id="COG0150">
    <property type="taxonomic scope" value="Bacteria"/>
</dbReference>
<dbReference type="HOGENOM" id="CLU_047116_0_0_6"/>
<dbReference type="UniPathway" id="UPA00074">
    <property type="reaction ID" value="UER00129"/>
</dbReference>
<dbReference type="Proteomes" id="UP000006821">
    <property type="component" value="Chromosome"/>
</dbReference>
<dbReference type="GO" id="GO:0005829">
    <property type="term" value="C:cytosol"/>
    <property type="evidence" value="ECO:0007669"/>
    <property type="project" value="TreeGrafter"/>
</dbReference>
<dbReference type="GO" id="GO:0005524">
    <property type="term" value="F:ATP binding"/>
    <property type="evidence" value="ECO:0007669"/>
    <property type="project" value="UniProtKB-KW"/>
</dbReference>
<dbReference type="GO" id="GO:0004637">
    <property type="term" value="F:phosphoribosylamine-glycine ligase activity"/>
    <property type="evidence" value="ECO:0007669"/>
    <property type="project" value="TreeGrafter"/>
</dbReference>
<dbReference type="GO" id="GO:0004641">
    <property type="term" value="F:phosphoribosylformylglycinamidine cyclo-ligase activity"/>
    <property type="evidence" value="ECO:0007669"/>
    <property type="project" value="UniProtKB-UniRule"/>
</dbReference>
<dbReference type="GO" id="GO:0006189">
    <property type="term" value="P:'de novo' IMP biosynthetic process"/>
    <property type="evidence" value="ECO:0007669"/>
    <property type="project" value="UniProtKB-UniRule"/>
</dbReference>
<dbReference type="GO" id="GO:0046084">
    <property type="term" value="P:adenine biosynthetic process"/>
    <property type="evidence" value="ECO:0007669"/>
    <property type="project" value="TreeGrafter"/>
</dbReference>
<dbReference type="CDD" id="cd02196">
    <property type="entry name" value="PurM"/>
    <property type="match status" value="1"/>
</dbReference>
<dbReference type="FunFam" id="3.30.1330.10:FF:000001">
    <property type="entry name" value="Phosphoribosylformylglycinamidine cyclo-ligase"/>
    <property type="match status" value="1"/>
</dbReference>
<dbReference type="FunFam" id="3.90.650.10:FF:000001">
    <property type="entry name" value="Phosphoribosylformylglycinamidine cyclo-ligase"/>
    <property type="match status" value="1"/>
</dbReference>
<dbReference type="Gene3D" id="3.90.650.10">
    <property type="entry name" value="PurM-like C-terminal domain"/>
    <property type="match status" value="1"/>
</dbReference>
<dbReference type="Gene3D" id="3.30.1330.10">
    <property type="entry name" value="PurM-like, N-terminal domain"/>
    <property type="match status" value="1"/>
</dbReference>
<dbReference type="HAMAP" id="MF_00741">
    <property type="entry name" value="AIRS"/>
    <property type="match status" value="1"/>
</dbReference>
<dbReference type="InterPro" id="IPR010918">
    <property type="entry name" value="PurM-like_C_dom"/>
</dbReference>
<dbReference type="InterPro" id="IPR036676">
    <property type="entry name" value="PurM-like_C_sf"/>
</dbReference>
<dbReference type="InterPro" id="IPR016188">
    <property type="entry name" value="PurM-like_N"/>
</dbReference>
<dbReference type="InterPro" id="IPR036921">
    <property type="entry name" value="PurM-like_N_sf"/>
</dbReference>
<dbReference type="InterPro" id="IPR004733">
    <property type="entry name" value="PurM_cligase"/>
</dbReference>
<dbReference type="NCBIfam" id="TIGR00878">
    <property type="entry name" value="purM"/>
    <property type="match status" value="1"/>
</dbReference>
<dbReference type="PANTHER" id="PTHR10520:SF12">
    <property type="entry name" value="TRIFUNCTIONAL PURINE BIOSYNTHETIC PROTEIN ADENOSINE-3"/>
    <property type="match status" value="1"/>
</dbReference>
<dbReference type="PANTHER" id="PTHR10520">
    <property type="entry name" value="TRIFUNCTIONAL PURINE BIOSYNTHETIC PROTEIN ADENOSINE-3-RELATED"/>
    <property type="match status" value="1"/>
</dbReference>
<dbReference type="Pfam" id="PF00586">
    <property type="entry name" value="AIRS"/>
    <property type="match status" value="1"/>
</dbReference>
<dbReference type="Pfam" id="PF02769">
    <property type="entry name" value="AIRS_C"/>
    <property type="match status" value="1"/>
</dbReference>
<dbReference type="SUPFAM" id="SSF56042">
    <property type="entry name" value="PurM C-terminal domain-like"/>
    <property type="match status" value="1"/>
</dbReference>
<dbReference type="SUPFAM" id="SSF55326">
    <property type="entry name" value="PurM N-terminal domain-like"/>
    <property type="match status" value="1"/>
</dbReference>
<comment type="catalytic activity">
    <reaction evidence="1">
        <text>2-formamido-N(1)-(5-O-phospho-beta-D-ribosyl)acetamidine + ATP = 5-amino-1-(5-phospho-beta-D-ribosyl)imidazole + ADP + phosphate + H(+)</text>
        <dbReference type="Rhea" id="RHEA:23032"/>
        <dbReference type="ChEBI" id="CHEBI:15378"/>
        <dbReference type="ChEBI" id="CHEBI:30616"/>
        <dbReference type="ChEBI" id="CHEBI:43474"/>
        <dbReference type="ChEBI" id="CHEBI:137981"/>
        <dbReference type="ChEBI" id="CHEBI:147287"/>
        <dbReference type="ChEBI" id="CHEBI:456216"/>
        <dbReference type="EC" id="6.3.3.1"/>
    </reaction>
</comment>
<comment type="pathway">
    <text evidence="1">Purine metabolism; IMP biosynthesis via de novo pathway; 5-amino-1-(5-phospho-D-ribosyl)imidazole from N(2)-formyl-N(1)-(5-phospho-D-ribosyl)glycinamide: step 2/2.</text>
</comment>
<comment type="subcellular location">
    <subcellularLocation>
        <location evidence="1">Cytoplasm</location>
    </subcellularLocation>
</comment>
<comment type="similarity">
    <text evidence="1">Belongs to the AIR synthase family.</text>
</comment>
<feature type="chain" id="PRO_0000258370" description="Phosphoribosylformylglycinamidine cyclo-ligase">
    <location>
        <begin position="1"/>
        <end position="345"/>
    </location>
</feature>
<evidence type="ECO:0000255" key="1">
    <source>
        <dbReference type="HAMAP-Rule" id="MF_00741"/>
    </source>
</evidence>
<protein>
    <recommendedName>
        <fullName evidence="1">Phosphoribosylformylglycinamidine cyclo-ligase</fullName>
        <ecNumber evidence="1">6.3.3.1</ecNumber>
    </recommendedName>
    <alternativeName>
        <fullName evidence="1">AIR synthase</fullName>
    </alternativeName>
    <alternativeName>
        <fullName evidence="1">AIRS</fullName>
    </alternativeName>
    <alternativeName>
        <fullName evidence="1">Phosphoribosyl-aminoimidazole synthetase</fullName>
    </alternativeName>
</protein>
<keyword id="KW-0067">ATP-binding</keyword>
<keyword id="KW-0963">Cytoplasm</keyword>
<keyword id="KW-0436">Ligase</keyword>
<keyword id="KW-0547">Nucleotide-binding</keyword>
<keyword id="KW-0658">Purine biosynthesis</keyword>
<keyword id="KW-1185">Reference proteome</keyword>
<reference key="1">
    <citation type="journal article" date="2004" name="PLoS Biol.">
        <title>Genomic insights into methanotrophy: the complete genome sequence of Methylococcus capsulatus (Bath).</title>
        <authorList>
            <person name="Ward N.L."/>
            <person name="Larsen O."/>
            <person name="Sakwa J."/>
            <person name="Bruseth L."/>
            <person name="Khouri H.M."/>
            <person name="Durkin A.S."/>
            <person name="Dimitrov G."/>
            <person name="Jiang L."/>
            <person name="Scanlan D."/>
            <person name="Kang K.H."/>
            <person name="Lewis M.R."/>
            <person name="Nelson K.E."/>
            <person name="Methe B.A."/>
            <person name="Wu M."/>
            <person name="Heidelberg J.F."/>
            <person name="Paulsen I.T."/>
            <person name="Fouts D.E."/>
            <person name="Ravel J."/>
            <person name="Tettelin H."/>
            <person name="Ren Q."/>
            <person name="Read T.D."/>
            <person name="DeBoy R.T."/>
            <person name="Seshadri R."/>
            <person name="Salzberg S.L."/>
            <person name="Jensen H.B."/>
            <person name="Birkeland N.K."/>
            <person name="Nelson W.C."/>
            <person name="Dodson R.J."/>
            <person name="Grindhaug S.H."/>
            <person name="Holt I.E."/>
            <person name="Eidhammer I."/>
            <person name="Jonasen I."/>
            <person name="Vanaken S."/>
            <person name="Utterback T.R."/>
            <person name="Feldblyum T.V."/>
            <person name="Fraser C.M."/>
            <person name="Lillehaug J.R."/>
            <person name="Eisen J.A."/>
        </authorList>
    </citation>
    <scope>NUCLEOTIDE SEQUENCE [LARGE SCALE GENOMIC DNA]</scope>
    <source>
        <strain>ATCC 33009 / NCIMB 11132 / Bath</strain>
    </source>
</reference>
<sequence length="345" mass="36189">MKTENPLSFDYKSAGVDIAAGNALVERIKPAARKTVRPGVLAGLGGFGSLFELPVDRYRKPVLVAGTDGVGTKLRLAIESGRHGGVGIDLVAMCANDIVVQGAEPLFFLDYYATGKLDVDVAASVIAGIAQGCERAGCALVGGETAEMPGMYAGGDYDLAGFCVGVVEKEAIIDGSRVRPGDRLIGLASSGPHSNGYSLIRKIVGHSGLGLDAPVAGRALGDWLLEPTRIYVKPLLELLKSVEVHALAHITGGGITENLPRVLPVGTAARIDTAAWTMPEIFRWLQRHGGVETPEMFRTFNCGVGMIVCVAPEDEARTLEALSSLGERAFAVGEIIAGEPAVHYV</sequence>
<proteinExistence type="inferred from homology"/>
<name>PUR5_METCA</name>
<gene>
    <name evidence="1" type="primary">purM</name>
    <name type="ordered locus">MCA0373</name>
</gene>